<organism>
    <name type="scientific">Rattus norvegicus</name>
    <name type="common">Rat</name>
    <dbReference type="NCBI Taxonomy" id="10116"/>
    <lineage>
        <taxon>Eukaryota</taxon>
        <taxon>Metazoa</taxon>
        <taxon>Chordata</taxon>
        <taxon>Craniata</taxon>
        <taxon>Vertebrata</taxon>
        <taxon>Euteleostomi</taxon>
        <taxon>Mammalia</taxon>
        <taxon>Eutheria</taxon>
        <taxon>Euarchontoglires</taxon>
        <taxon>Glires</taxon>
        <taxon>Rodentia</taxon>
        <taxon>Myomorpha</taxon>
        <taxon>Muroidea</taxon>
        <taxon>Muridae</taxon>
        <taxon>Murinae</taxon>
        <taxon>Rattus</taxon>
    </lineage>
</organism>
<sequence length="498" mass="61240">MANKKRAMSFSEKHQQLVDENFRKSLHVQVLNKLERQAKNQVVQNENDERVERQRFLRVLQNEQFELDMEEAVQKAEENKRMRDRQLEQEERLANELARLKHESLKDEKMRQQVRENSIELRELEQKLKAAYMNKERAAQIVEKDVIKYEQMKRDAEIERIMMEEHKRLLKEENVKQEKRDKERAQYYVDLEKQLEDQERRKQEAYEQLLKEKLMIDEIVRKIYEEDQLERQQKLEKRNAIQKYIKEFQRAQDLWRQKKREEMEEENRKILEFAKIQEQREGERMARVQESEEKRVQRQNLLIQKLEETLRQRDDLERVRQELYLEEYAEFIKLKMKEEVEQRLRKQRDRKQDFKDQMALREVLLQAAKEEEEAFKKAMLAKFAEDDRIELMNAQKQRMKQLEHKRAVEKLIEERRNQFLADKQRELEELQLQQRRQGCINEIIEEERLRLLKEHASKLLGYLPKGVFKKEDDVDMLGEEFRKAYQKKSEVCEEKGSS</sequence>
<comment type="function">
    <text evidence="2 3">Microtubule inner protein (MIP) part of the dynein-decorated doublet microtubules (DMTs) in cilia axoneme, which is required for motile cilia beating (By similarity). May play a role in the control of meiotic division and germ cell differentiation through regulation of pairing and recombination during meiosis (By similarity). Required for sperm flagella assembly (By similarity). May play a role in the assembly and function of the outer dynein arm-docking complex (ODA-DC). ODA-DC mediates outer dynein arms (ODA) binding onto the axonemal doublet microtubules (By similarity).</text>
</comment>
<comment type="subunit">
    <text evidence="2 3">Able to form oligomers. Microtubule inner protein component of sperm flagellar doublet microtubules (By similarity). Interacts with ODAD1 (By similarity). Interacts with BBOF1 (By similarity).</text>
</comment>
<comment type="subcellular location">
    <subcellularLocation>
        <location evidence="2">Nucleus</location>
    </subcellularLocation>
    <subcellularLocation>
        <location evidence="1">Cytoplasm</location>
        <location evidence="1">Cytoskeleton</location>
        <location evidence="1">Cilium axoneme</location>
    </subcellularLocation>
    <subcellularLocation>
        <location evidence="3">Cytoplasm</location>
        <location evidence="3">Cytoskeleton</location>
        <location evidence="3">Flagellum axoneme</location>
    </subcellularLocation>
    <text evidence="1">Microtubule inner protein (MIP) part of the dynein-decorated doublet microtubules (DMTs) in cilia axoneme.</text>
</comment>
<comment type="similarity">
    <text evidence="5">Belongs to the MNS1 family.</text>
</comment>
<keyword id="KW-0966">Cell projection</keyword>
<keyword id="KW-0969">Cilium</keyword>
<keyword id="KW-0175">Coiled coil</keyword>
<keyword id="KW-0963">Cytoplasm</keyword>
<keyword id="KW-0206">Cytoskeleton</keyword>
<keyword id="KW-0282">Flagellum</keyword>
<keyword id="KW-0469">Meiosis</keyword>
<keyword id="KW-0539">Nucleus</keyword>
<keyword id="KW-0597">Phosphoprotein</keyword>
<keyword id="KW-1185">Reference proteome</keyword>
<accession>Q6AXQ8</accession>
<reference key="1">
    <citation type="journal article" date="2004" name="Genome Res.">
        <title>The status, quality, and expansion of the NIH full-length cDNA project: the Mammalian Gene Collection (MGC).</title>
        <authorList>
            <consortium name="The MGC Project Team"/>
        </authorList>
    </citation>
    <scope>NUCLEOTIDE SEQUENCE [LARGE SCALE MRNA]</scope>
    <source>
        <tissue>Testis</tissue>
    </source>
</reference>
<protein>
    <recommendedName>
        <fullName>Meiosis-specific nuclear structural protein 1</fullName>
    </recommendedName>
</protein>
<gene>
    <name type="primary">Mns1</name>
</gene>
<dbReference type="EMBL" id="BC079390">
    <property type="protein sequence ID" value="AAH79390.1"/>
    <property type="molecule type" value="mRNA"/>
</dbReference>
<dbReference type="RefSeq" id="NP_001007753.1">
    <property type="nucleotide sequence ID" value="NM_001007752.1"/>
</dbReference>
<dbReference type="SMR" id="Q6AXQ8"/>
<dbReference type="BioGRID" id="263961">
    <property type="interactions" value="1"/>
</dbReference>
<dbReference type="FunCoup" id="Q6AXQ8">
    <property type="interactions" value="256"/>
</dbReference>
<dbReference type="STRING" id="10116.ENSRNOP00000069371"/>
<dbReference type="PhosphoSitePlus" id="Q6AXQ8"/>
<dbReference type="PaxDb" id="10116-ENSRNOP00000007941"/>
<dbReference type="Ensembl" id="ENSRNOT00000077613.2">
    <property type="protein sequence ID" value="ENSRNOP00000069371.1"/>
    <property type="gene ID" value="ENSRNOG00000057867.2"/>
</dbReference>
<dbReference type="GeneID" id="363093"/>
<dbReference type="KEGG" id="rno:363093"/>
<dbReference type="UCSC" id="RGD:1549718">
    <property type="organism name" value="rat"/>
</dbReference>
<dbReference type="AGR" id="RGD:1549718"/>
<dbReference type="CTD" id="55329"/>
<dbReference type="RGD" id="1549718">
    <property type="gene designation" value="Mns1"/>
</dbReference>
<dbReference type="eggNOG" id="ENOG502QS9D">
    <property type="taxonomic scope" value="Eukaryota"/>
</dbReference>
<dbReference type="GeneTree" id="ENSGT00730000111210"/>
<dbReference type="HOGENOM" id="CLU_034848_0_0_1"/>
<dbReference type="InParanoid" id="Q6AXQ8"/>
<dbReference type="OMA" id="QIRNQMV"/>
<dbReference type="OrthoDB" id="84639at9989"/>
<dbReference type="PhylomeDB" id="Q6AXQ8"/>
<dbReference type="TreeFam" id="TF329219"/>
<dbReference type="PRO" id="PR:Q6AXQ8"/>
<dbReference type="Proteomes" id="UP000002494">
    <property type="component" value="Chromosome 8"/>
</dbReference>
<dbReference type="Bgee" id="ENSRNOG00000057867">
    <property type="expression patterns" value="Expressed in testis and 19 other cell types or tissues"/>
</dbReference>
<dbReference type="GO" id="GO:0160111">
    <property type="term" value="C:axonemal A tubule inner sheath"/>
    <property type="evidence" value="ECO:0000250"/>
    <property type="project" value="UniProtKB"/>
</dbReference>
<dbReference type="GO" id="GO:0005879">
    <property type="term" value="C:axonemal microtubule"/>
    <property type="evidence" value="ECO:0000250"/>
    <property type="project" value="UniProtKB"/>
</dbReference>
<dbReference type="GO" id="GO:0005930">
    <property type="term" value="C:axoneme"/>
    <property type="evidence" value="ECO:0000250"/>
    <property type="project" value="UniProtKB"/>
</dbReference>
<dbReference type="GO" id="GO:0036064">
    <property type="term" value="C:ciliary basal body"/>
    <property type="evidence" value="ECO:0007669"/>
    <property type="project" value="Ensembl"/>
</dbReference>
<dbReference type="GO" id="GO:0005829">
    <property type="term" value="C:cytosol"/>
    <property type="evidence" value="ECO:0007669"/>
    <property type="project" value="Ensembl"/>
</dbReference>
<dbReference type="GO" id="GO:0005882">
    <property type="term" value="C:intermediate filament"/>
    <property type="evidence" value="ECO:0000266"/>
    <property type="project" value="RGD"/>
</dbReference>
<dbReference type="GO" id="GO:0031514">
    <property type="term" value="C:motile cilium"/>
    <property type="evidence" value="ECO:0000318"/>
    <property type="project" value="GO_Central"/>
</dbReference>
<dbReference type="GO" id="GO:0005635">
    <property type="term" value="C:nuclear envelope"/>
    <property type="evidence" value="ECO:0000266"/>
    <property type="project" value="RGD"/>
</dbReference>
<dbReference type="GO" id="GO:0016607">
    <property type="term" value="C:nuclear speck"/>
    <property type="evidence" value="ECO:0007669"/>
    <property type="project" value="Ensembl"/>
</dbReference>
<dbReference type="GO" id="GO:0036126">
    <property type="term" value="C:sperm flagellum"/>
    <property type="evidence" value="ECO:0000250"/>
    <property type="project" value="UniProtKB"/>
</dbReference>
<dbReference type="GO" id="GO:0042802">
    <property type="term" value="F:identical protein binding"/>
    <property type="evidence" value="ECO:0000266"/>
    <property type="project" value="RGD"/>
</dbReference>
<dbReference type="GO" id="GO:0044782">
    <property type="term" value="P:cilium organization"/>
    <property type="evidence" value="ECO:0000266"/>
    <property type="project" value="RGD"/>
</dbReference>
<dbReference type="GO" id="GO:0030317">
    <property type="term" value="P:flagellated sperm motility"/>
    <property type="evidence" value="ECO:0000250"/>
    <property type="project" value="UniProtKB"/>
</dbReference>
<dbReference type="GO" id="GO:0070986">
    <property type="term" value="P:left/right axis specification"/>
    <property type="evidence" value="ECO:0000266"/>
    <property type="project" value="RGD"/>
</dbReference>
<dbReference type="GO" id="GO:0051321">
    <property type="term" value="P:meiotic cell cycle"/>
    <property type="evidence" value="ECO:0007669"/>
    <property type="project" value="UniProtKB-KW"/>
</dbReference>
<dbReference type="GO" id="GO:0045724">
    <property type="term" value="P:positive regulation of cilium assembly"/>
    <property type="evidence" value="ECO:0000266"/>
    <property type="project" value="RGD"/>
</dbReference>
<dbReference type="GO" id="GO:0007288">
    <property type="term" value="P:sperm axoneme assembly"/>
    <property type="evidence" value="ECO:0000266"/>
    <property type="project" value="RGD"/>
</dbReference>
<dbReference type="GO" id="GO:0007283">
    <property type="term" value="P:spermatogenesis"/>
    <property type="evidence" value="ECO:0000266"/>
    <property type="project" value="RGD"/>
</dbReference>
<dbReference type="InterPro" id="IPR026504">
    <property type="entry name" value="MNS1"/>
</dbReference>
<dbReference type="InterPro" id="IPR043597">
    <property type="entry name" value="TPH_dom"/>
</dbReference>
<dbReference type="PANTHER" id="PTHR19265">
    <property type="entry name" value="MEIOSIS-SPECIFIC NUCLEAR STRUCTURAL PROTEIN 1"/>
    <property type="match status" value="1"/>
</dbReference>
<dbReference type="PANTHER" id="PTHR19265:SF0">
    <property type="entry name" value="MEIOSIS-SPECIFIC NUCLEAR STRUCTURAL PROTEIN 1"/>
    <property type="match status" value="1"/>
</dbReference>
<dbReference type="Pfam" id="PF13868">
    <property type="entry name" value="TPH"/>
    <property type="match status" value="1"/>
</dbReference>
<name>MNS1_RAT</name>
<evidence type="ECO:0000250" key="1">
    <source>
        <dbReference type="UniProtKB" id="Q2KIQ2"/>
    </source>
</evidence>
<evidence type="ECO:0000250" key="2">
    <source>
        <dbReference type="UniProtKB" id="Q61884"/>
    </source>
</evidence>
<evidence type="ECO:0000250" key="3">
    <source>
        <dbReference type="UniProtKB" id="Q8NEH6"/>
    </source>
</evidence>
<evidence type="ECO:0000255" key="4"/>
<evidence type="ECO:0000305" key="5"/>
<proteinExistence type="evidence at transcript level"/>
<feature type="chain" id="PRO_0000298924" description="Meiosis-specific nuclear structural protein 1">
    <location>
        <begin position="1"/>
        <end position="498"/>
    </location>
</feature>
<feature type="region of interest" description="Interaction with BBOF1" evidence="2">
    <location>
        <begin position="1"/>
        <end position="314"/>
    </location>
</feature>
<feature type="coiled-coil region" evidence="4">
    <location>
        <begin position="29"/>
        <end position="253"/>
    </location>
</feature>
<feature type="coiled-coil region" evidence="4">
    <location>
        <begin position="287"/>
        <end position="360"/>
    </location>
</feature>
<feature type="coiled-coil region" evidence="4">
    <location>
        <begin position="390"/>
        <end position="437"/>
    </location>
</feature>
<feature type="modified residue" description="Phosphotyrosine" evidence="2">
    <location>
        <position position="188"/>
    </location>
</feature>